<dbReference type="EC" id="1.4.4.2" evidence="1"/>
<dbReference type="EMBL" id="AL591688">
    <property type="protein sequence ID" value="CAC46126.1"/>
    <property type="molecule type" value="Genomic_DNA"/>
</dbReference>
<dbReference type="RefSeq" id="NP_385653.1">
    <property type="nucleotide sequence ID" value="NC_003047.1"/>
</dbReference>
<dbReference type="RefSeq" id="WP_010969293.1">
    <property type="nucleotide sequence ID" value="NC_003047.1"/>
</dbReference>
<dbReference type="SMR" id="Q92Q11"/>
<dbReference type="EnsemblBacteria" id="CAC46126">
    <property type="protein sequence ID" value="CAC46126"/>
    <property type="gene ID" value="SMc02049"/>
</dbReference>
<dbReference type="KEGG" id="sme:SMc02049"/>
<dbReference type="PATRIC" id="fig|266834.11.peg.2971"/>
<dbReference type="eggNOG" id="COG0403">
    <property type="taxonomic scope" value="Bacteria"/>
</dbReference>
<dbReference type="eggNOG" id="COG1003">
    <property type="taxonomic scope" value="Bacteria"/>
</dbReference>
<dbReference type="HOGENOM" id="CLU_004620_4_0_5"/>
<dbReference type="OrthoDB" id="9801272at2"/>
<dbReference type="Proteomes" id="UP000001976">
    <property type="component" value="Chromosome"/>
</dbReference>
<dbReference type="GO" id="GO:0005829">
    <property type="term" value="C:cytosol"/>
    <property type="evidence" value="ECO:0007669"/>
    <property type="project" value="TreeGrafter"/>
</dbReference>
<dbReference type="GO" id="GO:0005960">
    <property type="term" value="C:glycine cleavage complex"/>
    <property type="evidence" value="ECO:0007669"/>
    <property type="project" value="TreeGrafter"/>
</dbReference>
<dbReference type="GO" id="GO:0016594">
    <property type="term" value="F:glycine binding"/>
    <property type="evidence" value="ECO:0007669"/>
    <property type="project" value="TreeGrafter"/>
</dbReference>
<dbReference type="GO" id="GO:0004375">
    <property type="term" value="F:glycine dehydrogenase (decarboxylating) activity"/>
    <property type="evidence" value="ECO:0007669"/>
    <property type="project" value="UniProtKB-EC"/>
</dbReference>
<dbReference type="GO" id="GO:0030170">
    <property type="term" value="F:pyridoxal phosphate binding"/>
    <property type="evidence" value="ECO:0007669"/>
    <property type="project" value="TreeGrafter"/>
</dbReference>
<dbReference type="GO" id="GO:0019464">
    <property type="term" value="P:glycine decarboxylation via glycine cleavage system"/>
    <property type="evidence" value="ECO:0007669"/>
    <property type="project" value="UniProtKB-UniRule"/>
</dbReference>
<dbReference type="CDD" id="cd00613">
    <property type="entry name" value="GDC-P"/>
    <property type="match status" value="2"/>
</dbReference>
<dbReference type="FunFam" id="3.40.640.10:FF:000005">
    <property type="entry name" value="Glycine dehydrogenase (decarboxylating), mitochondrial"/>
    <property type="match status" value="1"/>
</dbReference>
<dbReference type="FunFam" id="3.90.1150.10:FF:000007">
    <property type="entry name" value="Glycine dehydrogenase (decarboxylating), mitochondrial"/>
    <property type="match status" value="1"/>
</dbReference>
<dbReference type="FunFam" id="3.40.640.10:FF:000007">
    <property type="entry name" value="glycine dehydrogenase (Decarboxylating), mitochondrial"/>
    <property type="match status" value="1"/>
</dbReference>
<dbReference type="Gene3D" id="3.90.1150.10">
    <property type="entry name" value="Aspartate Aminotransferase, domain 1"/>
    <property type="match status" value="2"/>
</dbReference>
<dbReference type="Gene3D" id="3.40.640.10">
    <property type="entry name" value="Type I PLP-dependent aspartate aminotransferase-like (Major domain)"/>
    <property type="match status" value="2"/>
</dbReference>
<dbReference type="HAMAP" id="MF_00711">
    <property type="entry name" value="GcvP"/>
    <property type="match status" value="1"/>
</dbReference>
<dbReference type="InterPro" id="IPR003437">
    <property type="entry name" value="GcvP"/>
</dbReference>
<dbReference type="InterPro" id="IPR049316">
    <property type="entry name" value="GDC-P_C"/>
</dbReference>
<dbReference type="InterPro" id="IPR049315">
    <property type="entry name" value="GDC-P_N"/>
</dbReference>
<dbReference type="InterPro" id="IPR020581">
    <property type="entry name" value="GDC_P"/>
</dbReference>
<dbReference type="InterPro" id="IPR015424">
    <property type="entry name" value="PyrdxlP-dep_Trfase"/>
</dbReference>
<dbReference type="InterPro" id="IPR015421">
    <property type="entry name" value="PyrdxlP-dep_Trfase_major"/>
</dbReference>
<dbReference type="InterPro" id="IPR015422">
    <property type="entry name" value="PyrdxlP-dep_Trfase_small"/>
</dbReference>
<dbReference type="NCBIfam" id="TIGR00461">
    <property type="entry name" value="gcvP"/>
    <property type="match status" value="1"/>
</dbReference>
<dbReference type="NCBIfam" id="NF003346">
    <property type="entry name" value="PRK04366.1"/>
    <property type="match status" value="1"/>
</dbReference>
<dbReference type="PANTHER" id="PTHR11773:SF1">
    <property type="entry name" value="GLYCINE DEHYDROGENASE (DECARBOXYLATING), MITOCHONDRIAL"/>
    <property type="match status" value="1"/>
</dbReference>
<dbReference type="PANTHER" id="PTHR11773">
    <property type="entry name" value="GLYCINE DEHYDROGENASE, DECARBOXYLATING"/>
    <property type="match status" value="1"/>
</dbReference>
<dbReference type="Pfam" id="PF21478">
    <property type="entry name" value="GcvP2_C"/>
    <property type="match status" value="1"/>
</dbReference>
<dbReference type="Pfam" id="PF02347">
    <property type="entry name" value="GDC-P"/>
    <property type="match status" value="2"/>
</dbReference>
<dbReference type="SUPFAM" id="SSF53383">
    <property type="entry name" value="PLP-dependent transferases"/>
    <property type="match status" value="2"/>
</dbReference>
<proteinExistence type="inferred from homology"/>
<keyword id="KW-0560">Oxidoreductase</keyword>
<keyword id="KW-0663">Pyridoxal phosphate</keyword>
<keyword id="KW-1185">Reference proteome</keyword>
<feature type="chain" id="PRO_0000166932" description="Glycine dehydrogenase (decarboxylating)">
    <location>
        <begin position="1"/>
        <end position="954"/>
    </location>
</feature>
<feature type="modified residue" description="N6-(pyridoxal phosphate)lysine" evidence="1">
    <location>
        <position position="704"/>
    </location>
</feature>
<accession>Q92Q11</accession>
<comment type="function">
    <text evidence="1">The glycine cleavage system catalyzes the degradation of glycine. The P protein binds the alpha-amino group of glycine through its pyridoxal phosphate cofactor; CO(2) is released and the remaining methylamine moiety is then transferred to the lipoamide cofactor of the H protein.</text>
</comment>
<comment type="catalytic activity">
    <reaction evidence="1">
        <text>N(6)-[(R)-lipoyl]-L-lysyl-[glycine-cleavage complex H protein] + glycine + H(+) = N(6)-[(R)-S(8)-aminomethyldihydrolipoyl]-L-lysyl-[glycine-cleavage complex H protein] + CO2</text>
        <dbReference type="Rhea" id="RHEA:24304"/>
        <dbReference type="Rhea" id="RHEA-COMP:10494"/>
        <dbReference type="Rhea" id="RHEA-COMP:10495"/>
        <dbReference type="ChEBI" id="CHEBI:15378"/>
        <dbReference type="ChEBI" id="CHEBI:16526"/>
        <dbReference type="ChEBI" id="CHEBI:57305"/>
        <dbReference type="ChEBI" id="CHEBI:83099"/>
        <dbReference type="ChEBI" id="CHEBI:83143"/>
        <dbReference type="EC" id="1.4.4.2"/>
    </reaction>
</comment>
<comment type="cofactor">
    <cofactor evidence="1">
        <name>pyridoxal 5'-phosphate</name>
        <dbReference type="ChEBI" id="CHEBI:597326"/>
    </cofactor>
</comment>
<comment type="subunit">
    <text evidence="1">The glycine cleavage system is composed of four proteins: P, T, L and H.</text>
</comment>
<comment type="similarity">
    <text evidence="1">Belongs to the GcvP family.</text>
</comment>
<protein>
    <recommendedName>
        <fullName evidence="1">Glycine dehydrogenase (decarboxylating)</fullName>
        <ecNumber evidence="1">1.4.4.2</ecNumber>
    </recommendedName>
    <alternativeName>
        <fullName evidence="1">Glycine cleavage system P-protein</fullName>
    </alternativeName>
    <alternativeName>
        <fullName evidence="1">Glycine decarboxylase</fullName>
    </alternativeName>
    <alternativeName>
        <fullName evidence="1">Glycine dehydrogenase (aminomethyl-transferring)</fullName>
    </alternativeName>
</protein>
<name>GCSP_RHIME</name>
<gene>
    <name evidence="1" type="primary">gcvP</name>
    <name type="ordered locus">R01547</name>
    <name type="ORF">SMc02049</name>
</gene>
<reference key="1">
    <citation type="journal article" date="2001" name="Proc. Natl. Acad. Sci. U.S.A.">
        <title>Analysis of the chromosome sequence of the legume symbiont Sinorhizobium meliloti strain 1021.</title>
        <authorList>
            <person name="Capela D."/>
            <person name="Barloy-Hubler F."/>
            <person name="Gouzy J."/>
            <person name="Bothe G."/>
            <person name="Ampe F."/>
            <person name="Batut J."/>
            <person name="Boistard P."/>
            <person name="Becker A."/>
            <person name="Boutry M."/>
            <person name="Cadieu E."/>
            <person name="Dreano S."/>
            <person name="Gloux S."/>
            <person name="Godrie T."/>
            <person name="Goffeau A."/>
            <person name="Kahn D."/>
            <person name="Kiss E."/>
            <person name="Lelaure V."/>
            <person name="Masuy D."/>
            <person name="Pohl T."/>
            <person name="Portetelle D."/>
            <person name="Puehler A."/>
            <person name="Purnelle B."/>
            <person name="Ramsperger U."/>
            <person name="Renard C."/>
            <person name="Thebault P."/>
            <person name="Vandenbol M."/>
            <person name="Weidner S."/>
            <person name="Galibert F."/>
        </authorList>
    </citation>
    <scope>NUCLEOTIDE SEQUENCE [LARGE SCALE GENOMIC DNA]</scope>
    <source>
        <strain>1021</strain>
    </source>
</reference>
<reference key="2">
    <citation type="journal article" date="2001" name="Science">
        <title>The composite genome of the legume symbiont Sinorhizobium meliloti.</title>
        <authorList>
            <person name="Galibert F."/>
            <person name="Finan T.M."/>
            <person name="Long S.R."/>
            <person name="Puehler A."/>
            <person name="Abola P."/>
            <person name="Ampe F."/>
            <person name="Barloy-Hubler F."/>
            <person name="Barnett M.J."/>
            <person name="Becker A."/>
            <person name="Boistard P."/>
            <person name="Bothe G."/>
            <person name="Boutry M."/>
            <person name="Bowser L."/>
            <person name="Buhrmester J."/>
            <person name="Cadieu E."/>
            <person name="Capela D."/>
            <person name="Chain P."/>
            <person name="Cowie A."/>
            <person name="Davis R.W."/>
            <person name="Dreano S."/>
            <person name="Federspiel N.A."/>
            <person name="Fisher R.F."/>
            <person name="Gloux S."/>
            <person name="Godrie T."/>
            <person name="Goffeau A."/>
            <person name="Golding B."/>
            <person name="Gouzy J."/>
            <person name="Gurjal M."/>
            <person name="Hernandez-Lucas I."/>
            <person name="Hong A."/>
            <person name="Huizar L."/>
            <person name="Hyman R.W."/>
            <person name="Jones T."/>
            <person name="Kahn D."/>
            <person name="Kahn M.L."/>
            <person name="Kalman S."/>
            <person name="Keating D.H."/>
            <person name="Kiss E."/>
            <person name="Komp C."/>
            <person name="Lelaure V."/>
            <person name="Masuy D."/>
            <person name="Palm C."/>
            <person name="Peck M.C."/>
            <person name="Pohl T.M."/>
            <person name="Portetelle D."/>
            <person name="Purnelle B."/>
            <person name="Ramsperger U."/>
            <person name="Surzycki R."/>
            <person name="Thebault P."/>
            <person name="Vandenbol M."/>
            <person name="Vorhoelter F.J."/>
            <person name="Weidner S."/>
            <person name="Wells D.H."/>
            <person name="Wong K."/>
            <person name="Yeh K.-C."/>
            <person name="Batut J."/>
        </authorList>
    </citation>
    <scope>NUCLEOTIDE SEQUENCE [LARGE SCALE GENOMIC DNA]</scope>
    <source>
        <strain>1021</strain>
    </source>
</reference>
<organism>
    <name type="scientific">Rhizobium meliloti (strain 1021)</name>
    <name type="common">Ensifer meliloti</name>
    <name type="synonym">Sinorhizobium meliloti</name>
    <dbReference type="NCBI Taxonomy" id="266834"/>
    <lineage>
        <taxon>Bacteria</taxon>
        <taxon>Pseudomonadati</taxon>
        <taxon>Pseudomonadota</taxon>
        <taxon>Alphaproteobacteria</taxon>
        <taxon>Hyphomicrobiales</taxon>
        <taxon>Rhizobiaceae</taxon>
        <taxon>Sinorhizobium/Ensifer group</taxon>
        <taxon>Sinorhizobium</taxon>
    </lineage>
</organism>
<evidence type="ECO:0000255" key="1">
    <source>
        <dbReference type="HAMAP-Rule" id="MF_00711"/>
    </source>
</evidence>
<sequence length="954" mass="104106">MSMPKDFTFTDYKPYDFANRRHIGPSPAEMDEMLKVVGYPSLDALIDDTVPPSIRQRTPLAWGAPMTEREALDKLRETANRNRKLVSLIGQGYYGTITPPVIQRNILENPAWYTAYTPYQPEISQGRLEALLNYQTMVCDLTGLDVANASLLDEATAAAEAMAIAERVAKSKAKAFFIDENCHPQTIALLKTRAEPLGWQIVLGDPFEDLDAAGVFGAIFQYPGTYGHVRDFSGLIAKLHGQGAIAAVAADPLALALLKSPGEMGADIAIGSTQRFGVPVGYGGPHAAYMAVKDAYKRSMPGRLVGVSVDARGNRAYRLSLQTREQHIRREKATSNICTAQVLLAVMASMYAVFHGPDGIKAIAQSVHQKTVRLAMGLEKLGYTVEPDVFFDTITVEVGKLQGIILKAAVAEEVNLRKIGTTRIGISLDERSRPVTLEAVWRAFGGDFKVEEFEPDYRLPQELLRTSAYLTHPIFHMNRAESEMTRYMRRLADRDLALDRAMIPLGSCTMKLNATAEMLPITWPEFSEIHPFVPADQALGYQHLIEDLSQKLCAITGYDAISMQPNSGAQGEYAGLLAIRAYHIANGNEHRDVCLIPTSAHGTNPASAQMAGMKVVVVKVSDAGEIDMDDFRAKAEQYADTLSCCMITYPSTHGVFEENVREVCEVVHKHGGQVYLDGANMNAMVGLSRPGDIGSDVSHLNLHKTFCIPHGGGGPGMGPIGVKSHLAPFLPGHPQTDGHEGAVSAAPFGSASILPISWSYCLMMGGEGLTQATKVAILNANYVAARLKGAYDVLYKSAKGRVAHECIIDTRPLAESAGVTVDDVAKRLIDCGFHAPTMSWPVAGTLMIEPTESETKAELDRFCDAMLAIREEARAIEDGRMDKVNNPLKNAPHTVEDLVGDWDRPYSREQACFPPGAFRVDKYWSPVNRVDNVYGDRNLVCTCPPIESYAEAAE</sequence>